<sequence>MKYQQLENLESGWKWKYLVKKHREGELITRYVEASAAQEAVNLLLALENEPVRVNVWIDRHMNPALLNRMKQTIRARRKRHFNAEHQHTRKKSIDLEFMVWQRLAGLAQRRGKTLSETIVQLIEDAEHKEKYATQMTTLKQDLQALLGKK</sequence>
<dbReference type="EMBL" id="CP001127">
    <property type="protein sequence ID" value="ACF92044.1"/>
    <property type="molecule type" value="Genomic_DNA"/>
</dbReference>
<dbReference type="RefSeq" id="WP_000877172.1">
    <property type="nucleotide sequence ID" value="NC_011094.1"/>
</dbReference>
<dbReference type="SMR" id="B4TSI2"/>
<dbReference type="KEGG" id="sew:SeSA_A1132"/>
<dbReference type="HOGENOM" id="CLU_142157_0_0_6"/>
<dbReference type="Proteomes" id="UP000001865">
    <property type="component" value="Chromosome"/>
</dbReference>
<dbReference type="GO" id="GO:0005737">
    <property type="term" value="C:cytoplasm"/>
    <property type="evidence" value="ECO:0007669"/>
    <property type="project" value="UniProtKB-SubCell"/>
</dbReference>
<dbReference type="GO" id="GO:0043565">
    <property type="term" value="F:sequence-specific DNA binding"/>
    <property type="evidence" value="ECO:0007669"/>
    <property type="project" value="UniProtKB-UniRule"/>
</dbReference>
<dbReference type="GO" id="GO:0051301">
    <property type="term" value="P:cell division"/>
    <property type="evidence" value="ECO:0007669"/>
    <property type="project" value="UniProtKB-UniRule"/>
</dbReference>
<dbReference type="GO" id="GO:0006355">
    <property type="term" value="P:regulation of DNA-templated transcription"/>
    <property type="evidence" value="ECO:0007669"/>
    <property type="project" value="InterPro"/>
</dbReference>
<dbReference type="Gene3D" id="1.20.1270.380">
    <property type="entry name" value="MatP, N-terminal domain"/>
    <property type="match status" value="1"/>
</dbReference>
<dbReference type="Gene3D" id="1.10.1220.10">
    <property type="entry name" value="Met repressor-like"/>
    <property type="match status" value="1"/>
</dbReference>
<dbReference type="HAMAP" id="MF_01073">
    <property type="entry name" value="MatP"/>
    <property type="match status" value="1"/>
</dbReference>
<dbReference type="InterPro" id="IPR013321">
    <property type="entry name" value="Arc_rbn_hlx_hlx"/>
</dbReference>
<dbReference type="InterPro" id="IPR009390">
    <property type="entry name" value="MatP"/>
</dbReference>
<dbReference type="InterPro" id="IPR035375">
    <property type="entry name" value="MatP_C"/>
</dbReference>
<dbReference type="InterPro" id="IPR035087">
    <property type="entry name" value="MatP_N"/>
</dbReference>
<dbReference type="InterPro" id="IPR038339">
    <property type="entry name" value="MatP_N_sf"/>
</dbReference>
<dbReference type="NCBIfam" id="NF003471">
    <property type="entry name" value="PRK05097.1"/>
    <property type="match status" value="1"/>
</dbReference>
<dbReference type="Pfam" id="PF06303">
    <property type="entry name" value="MatP"/>
    <property type="match status" value="1"/>
</dbReference>
<dbReference type="Pfam" id="PF17414">
    <property type="entry name" value="MatP_C"/>
    <property type="match status" value="1"/>
</dbReference>
<reference key="1">
    <citation type="journal article" date="2011" name="J. Bacteriol.">
        <title>Comparative genomics of 28 Salmonella enterica isolates: evidence for CRISPR-mediated adaptive sublineage evolution.</title>
        <authorList>
            <person name="Fricke W.F."/>
            <person name="Mammel M.K."/>
            <person name="McDermott P.F."/>
            <person name="Tartera C."/>
            <person name="White D.G."/>
            <person name="Leclerc J.E."/>
            <person name="Ravel J."/>
            <person name="Cebula T.A."/>
        </authorList>
    </citation>
    <scope>NUCLEOTIDE SEQUENCE [LARGE SCALE GENOMIC DNA]</scope>
    <source>
        <strain>CVM19633</strain>
    </source>
</reference>
<comment type="function">
    <text evidence="1">Required for spatial organization of the terminus region of the chromosome (Ter macrodomain) during the cell cycle. Prevents early segregation of duplicated Ter macrodomains during cell division. Binds specifically to matS, which is a 13 bp signature motif repeated within the Ter macrodomain.</text>
</comment>
<comment type="subunit">
    <text evidence="1">Homodimer.</text>
</comment>
<comment type="subcellular location">
    <subcellularLocation>
        <location evidence="1">Cytoplasm</location>
    </subcellularLocation>
</comment>
<comment type="similarity">
    <text evidence="1">Belongs to the MatP family.</text>
</comment>
<name>MATP_SALSV</name>
<evidence type="ECO:0000255" key="1">
    <source>
        <dbReference type="HAMAP-Rule" id="MF_01073"/>
    </source>
</evidence>
<gene>
    <name evidence="1" type="primary">matP</name>
    <name type="ordered locus">SeSA_A1132</name>
</gene>
<feature type="chain" id="PRO_1000136680" description="Macrodomain Ter protein">
    <location>
        <begin position="1"/>
        <end position="150"/>
    </location>
</feature>
<proteinExistence type="inferred from homology"/>
<accession>B4TSI2</accession>
<organism>
    <name type="scientific">Salmonella schwarzengrund (strain CVM19633)</name>
    <dbReference type="NCBI Taxonomy" id="439843"/>
    <lineage>
        <taxon>Bacteria</taxon>
        <taxon>Pseudomonadati</taxon>
        <taxon>Pseudomonadota</taxon>
        <taxon>Gammaproteobacteria</taxon>
        <taxon>Enterobacterales</taxon>
        <taxon>Enterobacteriaceae</taxon>
        <taxon>Salmonella</taxon>
    </lineage>
</organism>
<protein>
    <recommendedName>
        <fullName evidence="1">Macrodomain Ter protein</fullName>
    </recommendedName>
</protein>
<keyword id="KW-0131">Cell cycle</keyword>
<keyword id="KW-0132">Cell division</keyword>
<keyword id="KW-0963">Cytoplasm</keyword>
<keyword id="KW-0238">DNA-binding</keyword>